<protein>
    <recommendedName>
        <fullName evidence="1">Septation ring formation regulator EzrA</fullName>
    </recommendedName>
</protein>
<gene>
    <name evidence="1" type="primary">ezrA</name>
    <name type="ordered locus">USA300HOU_1705</name>
</gene>
<dbReference type="EMBL" id="CP000730">
    <property type="protein sequence ID" value="ABX29712.1"/>
    <property type="molecule type" value="Genomic_DNA"/>
</dbReference>
<dbReference type="RefSeq" id="WP_000244865.1">
    <property type="nucleotide sequence ID" value="NC_010079.1"/>
</dbReference>
<dbReference type="SMR" id="A8Z2N4"/>
<dbReference type="KEGG" id="sax:USA300HOU_1705"/>
<dbReference type="HOGENOM" id="CLU_034079_1_0_9"/>
<dbReference type="GO" id="GO:0005886">
    <property type="term" value="C:plasma membrane"/>
    <property type="evidence" value="ECO:0007669"/>
    <property type="project" value="UniProtKB-SubCell"/>
</dbReference>
<dbReference type="GO" id="GO:0005940">
    <property type="term" value="C:septin ring"/>
    <property type="evidence" value="ECO:0007669"/>
    <property type="project" value="InterPro"/>
</dbReference>
<dbReference type="GO" id="GO:0000917">
    <property type="term" value="P:division septum assembly"/>
    <property type="evidence" value="ECO:0007669"/>
    <property type="project" value="UniProtKB-KW"/>
</dbReference>
<dbReference type="GO" id="GO:0000921">
    <property type="term" value="P:septin ring assembly"/>
    <property type="evidence" value="ECO:0007669"/>
    <property type="project" value="InterPro"/>
</dbReference>
<dbReference type="HAMAP" id="MF_00728">
    <property type="entry name" value="EzrA"/>
    <property type="match status" value="1"/>
</dbReference>
<dbReference type="InterPro" id="IPR010379">
    <property type="entry name" value="EzrA"/>
</dbReference>
<dbReference type="NCBIfam" id="NF003412">
    <property type="entry name" value="PRK04778.1-6"/>
    <property type="match status" value="1"/>
</dbReference>
<dbReference type="Pfam" id="PF06160">
    <property type="entry name" value="EzrA"/>
    <property type="match status" value="1"/>
</dbReference>
<reference key="1">
    <citation type="journal article" date="2007" name="BMC Microbiol.">
        <title>Subtle genetic changes enhance virulence of methicillin resistant and sensitive Staphylococcus aureus.</title>
        <authorList>
            <person name="Highlander S.K."/>
            <person name="Hulten K.G."/>
            <person name="Qin X."/>
            <person name="Jiang H."/>
            <person name="Yerrapragada S."/>
            <person name="Mason E.O. Jr."/>
            <person name="Shang Y."/>
            <person name="Williams T.M."/>
            <person name="Fortunov R.M."/>
            <person name="Liu Y."/>
            <person name="Igboeli O."/>
            <person name="Petrosino J."/>
            <person name="Tirumalai M."/>
            <person name="Uzman A."/>
            <person name="Fox G.E."/>
            <person name="Cardenas A.M."/>
            <person name="Muzny D.M."/>
            <person name="Hemphill L."/>
            <person name="Ding Y."/>
            <person name="Dugan S."/>
            <person name="Blyth P.R."/>
            <person name="Buhay C.J."/>
            <person name="Dinh H.H."/>
            <person name="Hawes A.C."/>
            <person name="Holder M."/>
            <person name="Kovar C.L."/>
            <person name="Lee S.L."/>
            <person name="Liu W."/>
            <person name="Nazareth L.V."/>
            <person name="Wang Q."/>
            <person name="Zhou J."/>
            <person name="Kaplan S.L."/>
            <person name="Weinstock G.M."/>
        </authorList>
    </citation>
    <scope>NUCLEOTIDE SEQUENCE [LARGE SCALE GENOMIC DNA]</scope>
    <source>
        <strain>USA300 / TCH1516</strain>
    </source>
</reference>
<feature type="chain" id="PRO_1000083321" description="Septation ring formation regulator EzrA">
    <location>
        <begin position="1"/>
        <end position="564"/>
    </location>
</feature>
<feature type="topological domain" description="Extracellular" evidence="1">
    <location>
        <begin position="1"/>
        <end position="4"/>
    </location>
</feature>
<feature type="transmembrane region" description="Helical" evidence="1">
    <location>
        <begin position="5"/>
        <end position="23"/>
    </location>
</feature>
<feature type="topological domain" description="Cytoplasmic" evidence="1">
    <location>
        <begin position="24"/>
        <end position="564"/>
    </location>
</feature>
<feature type="coiled-coil region" evidence="1">
    <location>
        <begin position="99"/>
        <end position="138"/>
    </location>
</feature>
<feature type="coiled-coil region" evidence="1">
    <location>
        <begin position="190"/>
        <end position="223"/>
    </location>
</feature>
<feature type="coiled-coil region" evidence="1">
    <location>
        <begin position="271"/>
        <end position="300"/>
    </location>
</feature>
<feature type="coiled-coil region" evidence="1">
    <location>
        <begin position="350"/>
        <end position="435"/>
    </location>
</feature>
<feature type="coiled-coil region" evidence="1">
    <location>
        <begin position="471"/>
        <end position="550"/>
    </location>
</feature>
<name>EZRA_STAAT</name>
<sequence length="564" mass="66200">MVLYIILAIIVIILIAVGVLFYLRSNKRQIIEKAIERKNEIETLPFDQNLAQLSKLNLKGETKTKYDAMKKDNVESTNKYLAPVEEKIHNAEALLDKFSFNASQSEIDDANELMDSYEQSYQQQLEDVNEIIALYKDNDELYDKCKVDYREMKRDVLANRHQFGEAASLLETEIEKFEPRLEQYEVLKADGNYVQAHNHIAALNEQMKQLRSYMEEIPELIRETQKELPGQFQDLKYGCRDLKVEGYDLDHVKVDSTLQSLKTELSFVEPLISRLELEEANDKLANINDKLDDMYDLIEHEVKAKNDVEETKDIITDNLFKAKDMNYTLQTEIEYVRENYYINESDAQSVRQFENEIQSLISVYDDILKEMSKSAVRYSEVQDNLQYLEDHVTVINDKQEKLQNHLIQLREDEAEAEDNLLRVQSKKEEVYRRLLASNLTSVPERFIIMKNEIDHEVRDVNEQFSERPIHVKQLKDKVSKIVIQMNTFEDEANDVLVNAVYAEKLIQYGNRYRKDYSNVDKSLNEAERLFKNNRYKRAIEIAEQALESVEPGVTKHIEEEVIKQ</sequence>
<accession>A8Z2N4</accession>
<proteinExistence type="inferred from homology"/>
<comment type="function">
    <text evidence="1">Negative regulator of FtsZ ring formation; modulates the frequency and position of FtsZ ring formation. Inhibits FtsZ ring formation at polar sites. Interacts either with FtsZ or with one of its binding partners to promote depolymerization.</text>
</comment>
<comment type="subcellular location">
    <subcellularLocation>
        <location evidence="1">Cell membrane</location>
        <topology evidence="1">Single-pass membrane protein</topology>
    </subcellularLocation>
    <text evidence="1">Colocalized with FtsZ to the nascent septal site.</text>
</comment>
<comment type="similarity">
    <text evidence="1">Belongs to the EzrA family.</text>
</comment>
<keyword id="KW-0131">Cell cycle</keyword>
<keyword id="KW-0132">Cell division</keyword>
<keyword id="KW-1003">Cell membrane</keyword>
<keyword id="KW-0175">Coiled coil</keyword>
<keyword id="KW-0472">Membrane</keyword>
<keyword id="KW-0717">Septation</keyword>
<keyword id="KW-0812">Transmembrane</keyword>
<keyword id="KW-1133">Transmembrane helix</keyword>
<evidence type="ECO:0000255" key="1">
    <source>
        <dbReference type="HAMAP-Rule" id="MF_00728"/>
    </source>
</evidence>
<organism>
    <name type="scientific">Staphylococcus aureus (strain USA300 / TCH1516)</name>
    <dbReference type="NCBI Taxonomy" id="451516"/>
    <lineage>
        <taxon>Bacteria</taxon>
        <taxon>Bacillati</taxon>
        <taxon>Bacillota</taxon>
        <taxon>Bacilli</taxon>
        <taxon>Bacillales</taxon>
        <taxon>Staphylococcaceae</taxon>
        <taxon>Staphylococcus</taxon>
    </lineage>
</organism>